<proteinExistence type="inferred from homology"/>
<keyword id="KW-0067">ATP-binding</keyword>
<keyword id="KW-0143">Chaperone</keyword>
<keyword id="KW-0963">Cytoplasm</keyword>
<keyword id="KW-0413">Isomerase</keyword>
<keyword id="KW-0547">Nucleotide-binding</keyword>
<keyword id="KW-1185">Reference proteome</keyword>
<accession>Q65MZ8</accession>
<accession>Q62YE5</accession>
<gene>
    <name evidence="1" type="primary">groEL</name>
    <name evidence="1" type="synonym">groL</name>
    <name type="ordered locus">BLi00624</name>
    <name type="ordered locus">BL03283</name>
</gene>
<evidence type="ECO:0000255" key="1">
    <source>
        <dbReference type="HAMAP-Rule" id="MF_00600"/>
    </source>
</evidence>
<protein>
    <recommendedName>
        <fullName evidence="1">Chaperonin GroEL</fullName>
        <ecNumber evidence="1">5.6.1.7</ecNumber>
    </recommendedName>
    <alternativeName>
        <fullName evidence="1">60 kDa chaperonin</fullName>
    </alternativeName>
    <alternativeName>
        <fullName evidence="1">Chaperonin-60</fullName>
        <shortName evidence="1">Cpn60</shortName>
    </alternativeName>
</protein>
<feature type="chain" id="PRO_0000063275" description="Chaperonin GroEL">
    <location>
        <begin position="1"/>
        <end position="544"/>
    </location>
</feature>
<feature type="binding site" evidence="1">
    <location>
        <begin position="29"/>
        <end position="32"/>
    </location>
    <ligand>
        <name>ATP</name>
        <dbReference type="ChEBI" id="CHEBI:30616"/>
    </ligand>
</feature>
<feature type="binding site" evidence="1">
    <location>
        <begin position="86"/>
        <end position="90"/>
    </location>
    <ligand>
        <name>ATP</name>
        <dbReference type="ChEBI" id="CHEBI:30616"/>
    </ligand>
</feature>
<feature type="binding site" evidence="1">
    <location>
        <position position="413"/>
    </location>
    <ligand>
        <name>ATP</name>
        <dbReference type="ChEBI" id="CHEBI:30616"/>
    </ligand>
</feature>
<feature type="binding site" evidence="1">
    <location>
        <begin position="476"/>
        <end position="478"/>
    </location>
    <ligand>
        <name>ATP</name>
        <dbReference type="ChEBI" id="CHEBI:30616"/>
    </ligand>
</feature>
<feature type="binding site" evidence="1">
    <location>
        <position position="492"/>
    </location>
    <ligand>
        <name>ATP</name>
        <dbReference type="ChEBI" id="CHEBI:30616"/>
    </ligand>
</feature>
<sequence length="544" mass="57570">MAKDIKFSEEARRSMLRGVDALADAVKVTLGPKGRNVVLEKKFGSPLITNDGVTIAKEIELEDAFENMGAKLVAEVASKTNDVAGDGTTTATVLAQAMIREGLKNVTAGANPVGVRKGIEQAVAVAVESLKEISKPIEGKESIAQVASISAADEEVGSLIAEAMERVGNDGVITIEESKGFTTELEVVEGMQFDRGYASPYMVTDSDKMEAVLENPYILVTDKKITNIQEILPVLEQVVQQGKPLLLIAEDVEGEALATLVVNKLRGTFNAVAVKAPGFGDRRKAMLEDISILTGAEVITEDLGLDLKSTQINQLGRASKVVVTKENTTIVEGAGDTEQIAARVNQIRAQVEETTSEFDKEKLQERLAKLAGGVAVIKVGAATETELKERKLRIEDALNSTRAAVEEGIVSGGGTALVNVYNKVAALEAEGDELTGINIVLRALEEPIRQIAHNAGLEGSVIVERLKNEEIGVGYNAATGEWVNMIDKGIVDPTKVTRSALQNAASVAAMFLTTEAVVADKPEENKGGAGMPDMGGMGGMGGMM</sequence>
<organism>
    <name type="scientific">Bacillus licheniformis (strain ATCC 14580 / DSM 13 / JCM 2505 / CCUG 7422 / NBRC 12200 / NCIMB 9375 / NCTC 10341 / NRRL NRS-1264 / Gibson 46)</name>
    <dbReference type="NCBI Taxonomy" id="279010"/>
    <lineage>
        <taxon>Bacteria</taxon>
        <taxon>Bacillati</taxon>
        <taxon>Bacillota</taxon>
        <taxon>Bacilli</taxon>
        <taxon>Bacillales</taxon>
        <taxon>Bacillaceae</taxon>
        <taxon>Bacillus</taxon>
    </lineage>
</organism>
<comment type="function">
    <text evidence="1">Together with its co-chaperonin GroES, plays an essential role in assisting protein folding. The GroEL-GroES system forms a nano-cage that allows encapsulation of the non-native substrate proteins and provides a physical environment optimized to promote and accelerate protein folding.</text>
</comment>
<comment type="catalytic activity">
    <reaction evidence="1">
        <text>ATP + H2O + a folded polypeptide = ADP + phosphate + an unfolded polypeptide.</text>
        <dbReference type="EC" id="5.6.1.7"/>
    </reaction>
</comment>
<comment type="subunit">
    <text evidence="1">Forms a cylinder of 14 subunits composed of two heptameric rings stacked back-to-back. Interacts with the co-chaperonin GroES.</text>
</comment>
<comment type="subcellular location">
    <subcellularLocation>
        <location evidence="1">Cytoplasm</location>
    </subcellularLocation>
</comment>
<comment type="similarity">
    <text evidence="1">Belongs to the chaperonin (HSP60) family.</text>
</comment>
<name>CH60_BACLD</name>
<dbReference type="EC" id="5.6.1.7" evidence="1"/>
<dbReference type="EMBL" id="AE017333">
    <property type="protein sequence ID" value="AAU39566.1"/>
    <property type="molecule type" value="Genomic_DNA"/>
</dbReference>
<dbReference type="EMBL" id="CP000002">
    <property type="protein sequence ID" value="AAU22213.1"/>
    <property type="molecule type" value="Genomic_DNA"/>
</dbReference>
<dbReference type="RefSeq" id="WP_003179250.1">
    <property type="nucleotide sequence ID" value="NC_006322.1"/>
</dbReference>
<dbReference type="SMR" id="Q65MZ8"/>
<dbReference type="STRING" id="279010.BL03283"/>
<dbReference type="GeneID" id="92862791"/>
<dbReference type="KEGG" id="bld:BLi00624"/>
<dbReference type="KEGG" id="bli:BL03283"/>
<dbReference type="eggNOG" id="COG0459">
    <property type="taxonomic scope" value="Bacteria"/>
</dbReference>
<dbReference type="HOGENOM" id="CLU_016503_3_0_9"/>
<dbReference type="Proteomes" id="UP000000606">
    <property type="component" value="Chromosome"/>
</dbReference>
<dbReference type="GO" id="GO:0005737">
    <property type="term" value="C:cytoplasm"/>
    <property type="evidence" value="ECO:0007669"/>
    <property type="project" value="UniProtKB-SubCell"/>
</dbReference>
<dbReference type="GO" id="GO:0005524">
    <property type="term" value="F:ATP binding"/>
    <property type="evidence" value="ECO:0007669"/>
    <property type="project" value="UniProtKB-UniRule"/>
</dbReference>
<dbReference type="GO" id="GO:0140662">
    <property type="term" value="F:ATP-dependent protein folding chaperone"/>
    <property type="evidence" value="ECO:0007669"/>
    <property type="project" value="InterPro"/>
</dbReference>
<dbReference type="GO" id="GO:0016853">
    <property type="term" value="F:isomerase activity"/>
    <property type="evidence" value="ECO:0007669"/>
    <property type="project" value="UniProtKB-KW"/>
</dbReference>
<dbReference type="GO" id="GO:0051082">
    <property type="term" value="F:unfolded protein binding"/>
    <property type="evidence" value="ECO:0007669"/>
    <property type="project" value="UniProtKB-UniRule"/>
</dbReference>
<dbReference type="GO" id="GO:0042026">
    <property type="term" value="P:protein refolding"/>
    <property type="evidence" value="ECO:0007669"/>
    <property type="project" value="UniProtKB-UniRule"/>
</dbReference>
<dbReference type="CDD" id="cd03344">
    <property type="entry name" value="GroEL"/>
    <property type="match status" value="1"/>
</dbReference>
<dbReference type="FunFam" id="1.10.560.10:FF:000001">
    <property type="entry name" value="60 kDa chaperonin"/>
    <property type="match status" value="1"/>
</dbReference>
<dbReference type="FunFam" id="3.50.7.10:FF:000001">
    <property type="entry name" value="60 kDa chaperonin"/>
    <property type="match status" value="1"/>
</dbReference>
<dbReference type="Gene3D" id="3.50.7.10">
    <property type="entry name" value="GroEL"/>
    <property type="match status" value="1"/>
</dbReference>
<dbReference type="Gene3D" id="1.10.560.10">
    <property type="entry name" value="GroEL-like equatorial domain"/>
    <property type="match status" value="1"/>
</dbReference>
<dbReference type="Gene3D" id="3.30.260.10">
    <property type="entry name" value="TCP-1-like chaperonin intermediate domain"/>
    <property type="match status" value="1"/>
</dbReference>
<dbReference type="HAMAP" id="MF_00600">
    <property type="entry name" value="CH60"/>
    <property type="match status" value="1"/>
</dbReference>
<dbReference type="InterPro" id="IPR018370">
    <property type="entry name" value="Chaperonin_Cpn60_CS"/>
</dbReference>
<dbReference type="InterPro" id="IPR001844">
    <property type="entry name" value="Cpn60/GroEL"/>
</dbReference>
<dbReference type="InterPro" id="IPR002423">
    <property type="entry name" value="Cpn60/GroEL/TCP-1"/>
</dbReference>
<dbReference type="InterPro" id="IPR027409">
    <property type="entry name" value="GroEL-like_apical_dom_sf"/>
</dbReference>
<dbReference type="InterPro" id="IPR027413">
    <property type="entry name" value="GROEL-like_equatorial_sf"/>
</dbReference>
<dbReference type="InterPro" id="IPR027410">
    <property type="entry name" value="TCP-1-like_intermed_sf"/>
</dbReference>
<dbReference type="NCBIfam" id="TIGR02348">
    <property type="entry name" value="GroEL"/>
    <property type="match status" value="1"/>
</dbReference>
<dbReference type="NCBIfam" id="NF000592">
    <property type="entry name" value="PRK00013.1"/>
    <property type="match status" value="1"/>
</dbReference>
<dbReference type="NCBIfam" id="NF009487">
    <property type="entry name" value="PRK12849.1"/>
    <property type="match status" value="1"/>
</dbReference>
<dbReference type="NCBIfam" id="NF009488">
    <property type="entry name" value="PRK12850.1"/>
    <property type="match status" value="1"/>
</dbReference>
<dbReference type="NCBIfam" id="NF009489">
    <property type="entry name" value="PRK12851.1"/>
    <property type="match status" value="1"/>
</dbReference>
<dbReference type="PANTHER" id="PTHR45633">
    <property type="entry name" value="60 KDA HEAT SHOCK PROTEIN, MITOCHONDRIAL"/>
    <property type="match status" value="1"/>
</dbReference>
<dbReference type="Pfam" id="PF00118">
    <property type="entry name" value="Cpn60_TCP1"/>
    <property type="match status" value="1"/>
</dbReference>
<dbReference type="PRINTS" id="PR00298">
    <property type="entry name" value="CHAPERONIN60"/>
</dbReference>
<dbReference type="SUPFAM" id="SSF52029">
    <property type="entry name" value="GroEL apical domain-like"/>
    <property type="match status" value="1"/>
</dbReference>
<dbReference type="SUPFAM" id="SSF48592">
    <property type="entry name" value="GroEL equatorial domain-like"/>
    <property type="match status" value="1"/>
</dbReference>
<dbReference type="SUPFAM" id="SSF54849">
    <property type="entry name" value="GroEL-intermediate domain like"/>
    <property type="match status" value="1"/>
</dbReference>
<dbReference type="PROSITE" id="PS00296">
    <property type="entry name" value="CHAPERONINS_CPN60"/>
    <property type="match status" value="1"/>
</dbReference>
<reference key="1">
    <citation type="journal article" date="2004" name="J. Mol. Microbiol. Biotechnol.">
        <title>The complete genome sequence of Bacillus licheniformis DSM13, an organism with great industrial potential.</title>
        <authorList>
            <person name="Veith B."/>
            <person name="Herzberg C."/>
            <person name="Steckel S."/>
            <person name="Feesche J."/>
            <person name="Maurer K.H."/>
            <person name="Ehrenreich P."/>
            <person name="Baeumer S."/>
            <person name="Henne A."/>
            <person name="Liesegang H."/>
            <person name="Merkl R."/>
            <person name="Ehrenreich A."/>
            <person name="Gottschalk G."/>
        </authorList>
    </citation>
    <scope>NUCLEOTIDE SEQUENCE [LARGE SCALE GENOMIC DNA]</scope>
    <source>
        <strain>ATCC 14580 / DSM 13 / JCM 2505 / CCUG 7422 / NBRC 12200 / NCIMB 9375 / NCTC 10341 / NRRL NRS-1264 / Gibson 46</strain>
    </source>
</reference>
<reference key="2">
    <citation type="journal article" date="2004" name="Genome Biol.">
        <title>Complete genome sequence of the industrial bacterium Bacillus licheniformis and comparisons with closely related Bacillus species.</title>
        <authorList>
            <person name="Rey M.W."/>
            <person name="Ramaiya P."/>
            <person name="Nelson B.A."/>
            <person name="Brody-Karpin S.D."/>
            <person name="Zaretsky E.J."/>
            <person name="Tang M."/>
            <person name="Lopez de Leon A."/>
            <person name="Xiang H."/>
            <person name="Gusti V."/>
            <person name="Clausen I.G."/>
            <person name="Olsen P.B."/>
            <person name="Rasmussen M.D."/>
            <person name="Andersen J.T."/>
            <person name="Joergensen P.L."/>
            <person name="Larsen T.S."/>
            <person name="Sorokin A."/>
            <person name="Bolotin A."/>
            <person name="Lapidus A."/>
            <person name="Galleron N."/>
            <person name="Ehrlich S.D."/>
            <person name="Berka R.M."/>
        </authorList>
    </citation>
    <scope>NUCLEOTIDE SEQUENCE [LARGE SCALE GENOMIC DNA]</scope>
    <source>
        <strain>ATCC 14580 / DSM 13 / JCM 2505 / CCUG 7422 / NBRC 12200 / NCIMB 9375 / NCTC 10341 / NRRL NRS-1264 / Gibson 46</strain>
    </source>
</reference>